<organism>
    <name type="scientific">Drosophila melanogaster</name>
    <name type="common">Fruit fly</name>
    <dbReference type="NCBI Taxonomy" id="7227"/>
    <lineage>
        <taxon>Eukaryota</taxon>
        <taxon>Metazoa</taxon>
        <taxon>Ecdysozoa</taxon>
        <taxon>Arthropoda</taxon>
        <taxon>Hexapoda</taxon>
        <taxon>Insecta</taxon>
        <taxon>Pterygota</taxon>
        <taxon>Neoptera</taxon>
        <taxon>Endopterygota</taxon>
        <taxon>Diptera</taxon>
        <taxon>Brachycera</taxon>
        <taxon>Muscomorpha</taxon>
        <taxon>Ephydroidea</taxon>
        <taxon>Drosophilidae</taxon>
        <taxon>Drosophila</taxon>
        <taxon>Sophophora</taxon>
    </lineage>
</organism>
<gene>
    <name evidence="6" type="primary">Mctp</name>
    <name type="ORF">CG15078</name>
</gene>
<name>MCTP_DROME</name>
<comment type="function">
    <text evidence="4">Calcium sensor which is essential for the stabilization of normal baseline neurotransmitter release and for the induction and long-term maintenance of presynaptic homeostatic plasticity (PubMed:28485711).</text>
</comment>
<comment type="cofactor">
    <cofactor evidence="2 4">
        <name>Ca(2+)</name>
        <dbReference type="ChEBI" id="CHEBI:29108"/>
    </cofactor>
    <text evidence="4">Binds Ca(2+) via the C2 domains in absence of phospholipids.</text>
</comment>
<comment type="subcellular location">
    <subcellularLocation>
        <location evidence="4">Endoplasmic reticulum membrane</location>
        <topology evidence="1">Multi-pass membrane protein</topology>
    </subcellularLocation>
</comment>
<comment type="alternative products">
    <event type="alternative splicing"/>
    <isoform>
        <id>A1ZBD6-1</id>
        <name>1</name>
        <sequence type="displayed"/>
    </isoform>
    <isoform>
        <id>A1ZBD6-2</id>
        <name>2</name>
        <sequence type="described" ref="VSP_059095"/>
    </isoform>
    <isoform>
        <id>A1ZBD6-3</id>
        <name>3</name>
        <sequence type="described" ref="VSP_059096"/>
    </isoform>
</comment>
<comment type="tissue specificity">
    <text evidence="4">Motor neurons (at protein level).</text>
</comment>
<comment type="disruption phenotype">
    <text evidence="4">Mutant flies exhibit impaired homeostatic modulation of presynaptic neurotransmitter release and altered baseline neurotransmitter release transmission.</text>
</comment>
<comment type="sequence caution" evidence="5">
    <conflict type="erroneous gene model prediction">
        <sequence resource="EMBL-CDS" id="AGB93610"/>
    </conflict>
</comment>
<feature type="chain" id="PRO_0000441713" description="Multiple C2 and transmembrane domain-containing protein">
    <location>
        <begin position="1"/>
        <end position="912"/>
    </location>
</feature>
<feature type="transmembrane region" description="Helical" evidence="1">
    <location>
        <begin position="729"/>
        <end position="749"/>
    </location>
</feature>
<feature type="transmembrane region" description="Helical" evidence="1">
    <location>
        <begin position="826"/>
        <end position="846"/>
    </location>
</feature>
<feature type="domain" description="C2 1" evidence="2">
    <location>
        <begin position="218"/>
        <end position="337"/>
    </location>
</feature>
<feature type="domain" description="C2 2" evidence="2">
    <location>
        <begin position="371"/>
        <end position="493"/>
    </location>
</feature>
<feature type="domain" description="C2 3" evidence="2">
    <location>
        <begin position="522"/>
        <end position="637"/>
    </location>
</feature>
<feature type="region of interest" description="Disordered" evidence="3">
    <location>
        <begin position="1"/>
        <end position="80"/>
    </location>
</feature>
<feature type="region of interest" description="Disordered" evidence="3">
    <location>
        <begin position="145"/>
        <end position="165"/>
    </location>
</feature>
<feature type="region of interest" description="Disordered" evidence="3">
    <location>
        <begin position="887"/>
        <end position="912"/>
    </location>
</feature>
<feature type="compositionally biased region" description="Low complexity" evidence="3">
    <location>
        <begin position="1"/>
        <end position="33"/>
    </location>
</feature>
<feature type="compositionally biased region" description="Polar residues" evidence="3">
    <location>
        <begin position="38"/>
        <end position="49"/>
    </location>
</feature>
<feature type="binding site" evidence="2">
    <location>
        <position position="252"/>
    </location>
    <ligand>
        <name>Ca(2+)</name>
        <dbReference type="ChEBI" id="CHEBI:29108"/>
        <label>1</label>
    </ligand>
</feature>
<feature type="binding site" evidence="2">
    <location>
        <position position="252"/>
    </location>
    <ligand>
        <name>Ca(2+)</name>
        <dbReference type="ChEBI" id="CHEBI:29108"/>
        <label>2</label>
    </ligand>
</feature>
<feature type="binding site" evidence="2">
    <location>
        <position position="258"/>
    </location>
    <ligand>
        <name>Ca(2+)</name>
        <dbReference type="ChEBI" id="CHEBI:29108"/>
        <label>1</label>
    </ligand>
</feature>
<feature type="binding site" evidence="2">
    <location>
        <position position="305"/>
    </location>
    <ligand>
        <name>Ca(2+)</name>
        <dbReference type="ChEBI" id="CHEBI:29108"/>
        <label>1</label>
    </ligand>
</feature>
<feature type="binding site" evidence="2">
    <location>
        <position position="305"/>
    </location>
    <ligand>
        <name>Ca(2+)</name>
        <dbReference type="ChEBI" id="CHEBI:29108"/>
        <label>2</label>
    </ligand>
</feature>
<feature type="binding site" evidence="2">
    <location>
        <position position="307"/>
    </location>
    <ligand>
        <name>Ca(2+)</name>
        <dbReference type="ChEBI" id="CHEBI:29108"/>
        <label>1</label>
    </ligand>
</feature>
<feature type="binding site" evidence="2">
    <location>
        <position position="307"/>
    </location>
    <ligand>
        <name>Ca(2+)</name>
        <dbReference type="ChEBI" id="CHEBI:29108"/>
        <label>2</label>
    </ligand>
</feature>
<feature type="binding site" evidence="2">
    <location>
        <position position="313"/>
    </location>
    <ligand>
        <name>Ca(2+)</name>
        <dbReference type="ChEBI" id="CHEBI:29108"/>
        <label>2</label>
    </ligand>
</feature>
<feature type="binding site" evidence="2">
    <location>
        <position position="553"/>
    </location>
    <ligand>
        <name>Ca(2+)</name>
        <dbReference type="ChEBI" id="CHEBI:29108"/>
        <label>3</label>
    </ligand>
</feature>
<feature type="binding site" evidence="2">
    <location>
        <position position="559"/>
    </location>
    <ligand>
        <name>Ca(2+)</name>
        <dbReference type="ChEBI" id="CHEBI:29108"/>
        <label>3</label>
    </ligand>
</feature>
<feature type="binding site" evidence="2">
    <location>
        <position position="605"/>
    </location>
    <ligand>
        <name>Ca(2+)</name>
        <dbReference type="ChEBI" id="CHEBI:29108"/>
        <label>3</label>
    </ligand>
</feature>
<feature type="binding site" evidence="2">
    <location>
        <position position="607"/>
    </location>
    <ligand>
        <name>Ca(2+)</name>
        <dbReference type="ChEBI" id="CHEBI:29108"/>
        <label>3</label>
    </ligand>
</feature>
<feature type="splice variant" id="VSP_059095" description="In isoform 2.">
    <original>MS</original>
    <variation>MLAGIGHVMQPLHLANSFKSSKNSERPQASVLCHRINKIFPVTA</variation>
    <location>
        <begin position="1"/>
        <end position="2"/>
    </location>
</feature>
<feature type="splice variant" id="VSP_059096" description="In isoform 3.">
    <location>
        <begin position="218"/>
        <end position="236"/>
    </location>
</feature>
<keyword id="KW-0025">Alternative splicing</keyword>
<keyword id="KW-0106">Calcium</keyword>
<keyword id="KW-0256">Endoplasmic reticulum</keyword>
<keyword id="KW-0472">Membrane</keyword>
<keyword id="KW-0479">Metal-binding</keyword>
<keyword id="KW-1185">Reference proteome</keyword>
<keyword id="KW-0677">Repeat</keyword>
<keyword id="KW-0812">Transmembrane</keyword>
<keyword id="KW-1133">Transmembrane helix</keyword>
<sequence>MSRIQYVDQVDQVELDQQQQPGSSSTVSGSTPPLQISPHGSPSLQQSQRLGKHLSKSASELNGHDCHLSESPHISPKRAKSAVAQQLAGVSSGGVASGVGVLQKTHGFFNNLRHRWSRAKSKDRLGRKSPSDFLEESTDYAADYSSEGSSVTHSPRHRSTTIGGSPLAREFRATAKMAQVIQRFGGSMEGRIDEHPENGSAGCSPPELSTQQQLEALQANELRRKREAQLRQFVFFQLRVHLKSGSDLVAMDKNGLSDPYVKFKVGGRLLHKSRTIHRDLNPVWDEVFIVPIEDPFQPIIVKVFDYDWGLQDDFMGSAKLDLTQLELGKAEDIHLQLCDSSGNGGSGLGEILINLTLWPRSQEDKEMHFQRNSKLAESSKRLKSQIWSSVVTILLVKAKDLPLAEDGSKLNDTHFKFRLGNEKYKSKSSWTERWLEQFDLHLFDEDQNLEIALWNRNTLYGKAIIDLSVFQRENTHGIWKPLEDCPGEVHLMLTISGTTALETISDLKAFKEDPREAQLLRERYKFLRCLQNLRDVGHLTVKVFGATGLAAADIGGKSDPFCVLELGNARLQTQTEYKTLTPNWNKIFTFNVKDITQVLEITVFDEDRDHRVEFLGKLVIPLLRIKSGVKRWYTLKDKNLCVRAKGNSPQIQLELTVVWSEIRAVCRALQPKEEKLIQQEAKFKRQLFLRNVNRLKEIIMDILDAARYVQSCFEWESPVRSSIAFVFWIVACVYGDLETVPLVLLLIILKNWLVRLITGTTDAAAHYDYEYDEDDDDDKEKEEKKSIKERLQAIQEVSQTVQNTIGYLASLGESTINTFNFSVPELTWLAVVLLLGAILVLHFVPLRWLLLFWGLMKFSRRLLRPNTIPNNELLDFLSRVPDNEEINQYRELPPSAPTDQTRNNPKKKLKGS</sequence>
<reference key="1">
    <citation type="journal article" date="2000" name="Science">
        <title>The genome sequence of Drosophila melanogaster.</title>
        <authorList>
            <person name="Adams M.D."/>
            <person name="Celniker S.E."/>
            <person name="Holt R.A."/>
            <person name="Evans C.A."/>
            <person name="Gocayne J.D."/>
            <person name="Amanatides P.G."/>
            <person name="Scherer S.E."/>
            <person name="Li P.W."/>
            <person name="Hoskins R.A."/>
            <person name="Galle R.F."/>
            <person name="George R.A."/>
            <person name="Lewis S.E."/>
            <person name="Richards S."/>
            <person name="Ashburner M."/>
            <person name="Henderson S.N."/>
            <person name="Sutton G.G."/>
            <person name="Wortman J.R."/>
            <person name="Yandell M.D."/>
            <person name="Zhang Q."/>
            <person name="Chen L.X."/>
            <person name="Brandon R.C."/>
            <person name="Rogers Y.-H.C."/>
            <person name="Blazej R.G."/>
            <person name="Champe M."/>
            <person name="Pfeiffer B.D."/>
            <person name="Wan K.H."/>
            <person name="Doyle C."/>
            <person name="Baxter E.G."/>
            <person name="Helt G."/>
            <person name="Nelson C.R."/>
            <person name="Miklos G.L.G."/>
            <person name="Abril J.F."/>
            <person name="Agbayani A."/>
            <person name="An H.-J."/>
            <person name="Andrews-Pfannkoch C."/>
            <person name="Baldwin D."/>
            <person name="Ballew R.M."/>
            <person name="Basu A."/>
            <person name="Baxendale J."/>
            <person name="Bayraktaroglu L."/>
            <person name="Beasley E.M."/>
            <person name="Beeson K.Y."/>
            <person name="Benos P.V."/>
            <person name="Berman B.P."/>
            <person name="Bhandari D."/>
            <person name="Bolshakov S."/>
            <person name="Borkova D."/>
            <person name="Botchan M.R."/>
            <person name="Bouck J."/>
            <person name="Brokstein P."/>
            <person name="Brottier P."/>
            <person name="Burtis K.C."/>
            <person name="Busam D.A."/>
            <person name="Butler H."/>
            <person name="Cadieu E."/>
            <person name="Center A."/>
            <person name="Chandra I."/>
            <person name="Cherry J.M."/>
            <person name="Cawley S."/>
            <person name="Dahlke C."/>
            <person name="Davenport L.B."/>
            <person name="Davies P."/>
            <person name="de Pablos B."/>
            <person name="Delcher A."/>
            <person name="Deng Z."/>
            <person name="Mays A.D."/>
            <person name="Dew I."/>
            <person name="Dietz S.M."/>
            <person name="Dodson K."/>
            <person name="Doup L.E."/>
            <person name="Downes M."/>
            <person name="Dugan-Rocha S."/>
            <person name="Dunkov B.C."/>
            <person name="Dunn P."/>
            <person name="Durbin K.J."/>
            <person name="Evangelista C.C."/>
            <person name="Ferraz C."/>
            <person name="Ferriera S."/>
            <person name="Fleischmann W."/>
            <person name="Fosler C."/>
            <person name="Gabrielian A.E."/>
            <person name="Garg N.S."/>
            <person name="Gelbart W.M."/>
            <person name="Glasser K."/>
            <person name="Glodek A."/>
            <person name="Gong F."/>
            <person name="Gorrell J.H."/>
            <person name="Gu Z."/>
            <person name="Guan P."/>
            <person name="Harris M."/>
            <person name="Harris N.L."/>
            <person name="Harvey D.A."/>
            <person name="Heiman T.J."/>
            <person name="Hernandez J.R."/>
            <person name="Houck J."/>
            <person name="Hostin D."/>
            <person name="Houston K.A."/>
            <person name="Howland T.J."/>
            <person name="Wei M.-H."/>
            <person name="Ibegwam C."/>
            <person name="Jalali M."/>
            <person name="Kalush F."/>
            <person name="Karpen G.H."/>
            <person name="Ke Z."/>
            <person name="Kennison J.A."/>
            <person name="Ketchum K.A."/>
            <person name="Kimmel B.E."/>
            <person name="Kodira C.D."/>
            <person name="Kraft C.L."/>
            <person name="Kravitz S."/>
            <person name="Kulp D."/>
            <person name="Lai Z."/>
            <person name="Lasko P."/>
            <person name="Lei Y."/>
            <person name="Levitsky A.A."/>
            <person name="Li J.H."/>
            <person name="Li Z."/>
            <person name="Liang Y."/>
            <person name="Lin X."/>
            <person name="Liu X."/>
            <person name="Mattei B."/>
            <person name="McIntosh T.C."/>
            <person name="McLeod M.P."/>
            <person name="McPherson D."/>
            <person name="Merkulov G."/>
            <person name="Milshina N.V."/>
            <person name="Mobarry C."/>
            <person name="Morris J."/>
            <person name="Moshrefi A."/>
            <person name="Mount S.M."/>
            <person name="Moy M."/>
            <person name="Murphy B."/>
            <person name="Murphy L."/>
            <person name="Muzny D.M."/>
            <person name="Nelson D.L."/>
            <person name="Nelson D.R."/>
            <person name="Nelson K.A."/>
            <person name="Nixon K."/>
            <person name="Nusskern D.R."/>
            <person name="Pacleb J.M."/>
            <person name="Palazzolo M."/>
            <person name="Pittman G.S."/>
            <person name="Pan S."/>
            <person name="Pollard J."/>
            <person name="Puri V."/>
            <person name="Reese M.G."/>
            <person name="Reinert K."/>
            <person name="Remington K."/>
            <person name="Saunders R.D.C."/>
            <person name="Scheeler F."/>
            <person name="Shen H."/>
            <person name="Shue B.C."/>
            <person name="Siden-Kiamos I."/>
            <person name="Simpson M."/>
            <person name="Skupski M.P."/>
            <person name="Smith T.J."/>
            <person name="Spier E."/>
            <person name="Spradling A.C."/>
            <person name="Stapleton M."/>
            <person name="Strong R."/>
            <person name="Sun E."/>
            <person name="Svirskas R."/>
            <person name="Tector C."/>
            <person name="Turner R."/>
            <person name="Venter E."/>
            <person name="Wang A.H."/>
            <person name="Wang X."/>
            <person name="Wang Z.-Y."/>
            <person name="Wassarman D.A."/>
            <person name="Weinstock G.M."/>
            <person name="Weissenbach J."/>
            <person name="Williams S.M."/>
            <person name="Woodage T."/>
            <person name="Worley K.C."/>
            <person name="Wu D."/>
            <person name="Yang S."/>
            <person name="Yao Q.A."/>
            <person name="Ye J."/>
            <person name="Yeh R.-F."/>
            <person name="Zaveri J.S."/>
            <person name="Zhan M."/>
            <person name="Zhang G."/>
            <person name="Zhao Q."/>
            <person name="Zheng L."/>
            <person name="Zheng X.H."/>
            <person name="Zhong F.N."/>
            <person name="Zhong W."/>
            <person name="Zhou X."/>
            <person name="Zhu S.C."/>
            <person name="Zhu X."/>
            <person name="Smith H.O."/>
            <person name="Gibbs R.A."/>
            <person name="Myers E.W."/>
            <person name="Rubin G.M."/>
            <person name="Venter J.C."/>
        </authorList>
    </citation>
    <scope>NUCLEOTIDE SEQUENCE [LARGE SCALE GENOMIC DNA]</scope>
    <source>
        <strain>Berkeley</strain>
    </source>
</reference>
<reference key="2">
    <citation type="journal article" date="2002" name="Genome Biol.">
        <title>Annotation of the Drosophila melanogaster euchromatic genome: a systematic review.</title>
        <authorList>
            <person name="Misra S."/>
            <person name="Crosby M.A."/>
            <person name="Mungall C.J."/>
            <person name="Matthews B.B."/>
            <person name="Campbell K.S."/>
            <person name="Hradecky P."/>
            <person name="Huang Y."/>
            <person name="Kaminker J.S."/>
            <person name="Millburn G.H."/>
            <person name="Prochnik S.E."/>
            <person name="Smith C.D."/>
            <person name="Tupy J.L."/>
            <person name="Whitfield E.J."/>
            <person name="Bayraktaroglu L."/>
            <person name="Berman B.P."/>
            <person name="Bettencourt B.R."/>
            <person name="Celniker S.E."/>
            <person name="de Grey A.D.N.J."/>
            <person name="Drysdale R.A."/>
            <person name="Harris N.L."/>
            <person name="Richter J."/>
            <person name="Russo S."/>
            <person name="Schroeder A.J."/>
            <person name="Shu S.Q."/>
            <person name="Stapleton M."/>
            <person name="Yamada C."/>
            <person name="Ashburner M."/>
            <person name="Gelbart W.M."/>
            <person name="Rubin G.M."/>
            <person name="Lewis S.E."/>
        </authorList>
    </citation>
    <scope>GENOME REANNOTATION</scope>
    <scope>ALTERNATIVE SPLICING</scope>
    <source>
        <strain>Berkeley</strain>
    </source>
</reference>
<reference key="3">
    <citation type="journal article" date="2017" name="Elife">
        <title>MCTP is an ER-resident calcium sensor that stabilizes synaptic transmission and homeostatic plasticity.</title>
        <authorList>
            <person name="Genc O."/>
            <person name="Dickman D.K."/>
            <person name="Ma W."/>
            <person name="Tong A."/>
            <person name="Fetter R.D."/>
            <person name="Davis G.W."/>
        </authorList>
    </citation>
    <scope>FUNCTION</scope>
    <scope>COFACTOR</scope>
    <scope>SUBCELLULAR LOCATION</scope>
    <scope>TISSUE SPECIFICITY</scope>
    <scope>DISRUPTION PHENOTYPE</scope>
</reference>
<dbReference type="EMBL" id="AE013599">
    <property type="protein sequence ID" value="AAO41353.3"/>
    <property type="molecule type" value="Genomic_DNA"/>
</dbReference>
<dbReference type="EMBL" id="AE013599">
    <property type="protein sequence ID" value="AHN56385.1"/>
    <property type="molecule type" value="Genomic_DNA"/>
</dbReference>
<dbReference type="EMBL" id="AE013599">
    <property type="protein sequence ID" value="AGB93610.1"/>
    <property type="status" value="ALT_SEQ"/>
    <property type="molecule type" value="Genomic_DNA"/>
</dbReference>
<dbReference type="EMBL" id="AE013599">
    <property type="protein sequence ID" value="ABI31105.2"/>
    <property type="molecule type" value="Genomic_DNA"/>
</dbReference>
<dbReference type="EMBL" id="AE013599">
    <property type="protein sequence ID" value="ALI30186.1"/>
    <property type="molecule type" value="Genomic_DNA"/>
</dbReference>
<dbReference type="RefSeq" id="NP_001036559.2">
    <molecule id="A1ZBD6-2"/>
    <property type="nucleotide sequence ID" value="NM_001043094.2"/>
</dbReference>
<dbReference type="RefSeq" id="NP_001261078.1">
    <property type="nucleotide sequence ID" value="NM_001274149.1"/>
</dbReference>
<dbReference type="RefSeq" id="NP_001286590.1">
    <molecule id="A1ZBD6-3"/>
    <property type="nucleotide sequence ID" value="NM_001299661.1"/>
</dbReference>
<dbReference type="RefSeq" id="NP_001303357.1">
    <molecule id="A1ZBD6-1"/>
    <property type="nucleotide sequence ID" value="NM_001316428.1"/>
</dbReference>
<dbReference type="RefSeq" id="NP_611372.3">
    <molecule id="A1ZBD6-3"/>
    <property type="nucleotide sequence ID" value="NM_137528.5"/>
</dbReference>
<dbReference type="SMR" id="A1ZBD6"/>
<dbReference type="FunCoup" id="A1ZBD6">
    <property type="interactions" value="133"/>
</dbReference>
<dbReference type="STRING" id="7227.FBpp0303039"/>
<dbReference type="PaxDb" id="7227-FBpp0303040"/>
<dbReference type="DNASU" id="37165"/>
<dbReference type="EnsemblMetazoa" id="FBtr0110970">
    <molecule id="A1ZBD6-3"/>
    <property type="protein sequence ID" value="FBpp0110270"/>
    <property type="gene ID" value="FBgn0034389"/>
</dbReference>
<dbReference type="EnsemblMetazoa" id="FBtr0330004">
    <property type="protein sequence ID" value="FBpp0303039"/>
    <property type="gene ID" value="FBgn0034389"/>
</dbReference>
<dbReference type="EnsemblMetazoa" id="FBtr0330005">
    <molecule id="A1ZBD6-2"/>
    <property type="protein sequence ID" value="FBpp0303040"/>
    <property type="gene ID" value="FBgn0034389"/>
</dbReference>
<dbReference type="EnsemblMetazoa" id="FBtr0345950">
    <molecule id="A1ZBD6-3"/>
    <property type="protein sequence ID" value="FBpp0311864"/>
    <property type="gene ID" value="FBgn0034389"/>
</dbReference>
<dbReference type="EnsemblMetazoa" id="FBtr0346955">
    <molecule id="A1ZBD6-1"/>
    <property type="protein sequence ID" value="FBpp0312419"/>
    <property type="gene ID" value="FBgn0034389"/>
</dbReference>
<dbReference type="GeneID" id="37165"/>
<dbReference type="KEGG" id="dme:Dmel_CG15078"/>
<dbReference type="UCSC" id="CG15078-RA">
    <molecule id="A1ZBD6-1"/>
    <property type="organism name" value="d. melanogaster"/>
</dbReference>
<dbReference type="AGR" id="FB:FBgn0034389"/>
<dbReference type="CTD" id="37165"/>
<dbReference type="FlyBase" id="FBgn0034389">
    <property type="gene designation" value="Mctp"/>
</dbReference>
<dbReference type="VEuPathDB" id="VectorBase:FBgn0034389"/>
<dbReference type="eggNOG" id="KOG1030">
    <property type="taxonomic scope" value="Eukaryota"/>
</dbReference>
<dbReference type="GeneTree" id="ENSGT00940000169787"/>
<dbReference type="HOGENOM" id="CLU_011170_2_0_1"/>
<dbReference type="InParanoid" id="A1ZBD6"/>
<dbReference type="OMA" id="DCGPTLE"/>
<dbReference type="OrthoDB" id="5973539at2759"/>
<dbReference type="PhylomeDB" id="A1ZBD6"/>
<dbReference type="BioGRID-ORCS" id="37165">
    <property type="hits" value="0 hits in 3 CRISPR screens"/>
</dbReference>
<dbReference type="GenomeRNAi" id="37165"/>
<dbReference type="PRO" id="PR:A1ZBD6"/>
<dbReference type="Proteomes" id="UP000000803">
    <property type="component" value="Chromosome 2R"/>
</dbReference>
<dbReference type="Bgee" id="FBgn0034389">
    <property type="expression patterns" value="Expressed in enteroblast (Drosophila) in digestive tract and 118 other cell types or tissues"/>
</dbReference>
<dbReference type="ExpressionAtlas" id="A1ZBD6">
    <property type="expression patterns" value="baseline and differential"/>
</dbReference>
<dbReference type="GO" id="GO:0005789">
    <property type="term" value="C:endoplasmic reticulum membrane"/>
    <property type="evidence" value="ECO:0000314"/>
    <property type="project" value="UniProtKB"/>
</dbReference>
<dbReference type="GO" id="GO:0016020">
    <property type="term" value="C:membrane"/>
    <property type="evidence" value="ECO:0000250"/>
    <property type="project" value="FlyBase"/>
</dbReference>
<dbReference type="GO" id="GO:0031594">
    <property type="term" value="C:neuromuscular junction"/>
    <property type="evidence" value="ECO:0000314"/>
    <property type="project" value="SynGO"/>
</dbReference>
<dbReference type="GO" id="GO:0030672">
    <property type="term" value="C:synaptic vesicle membrane"/>
    <property type="evidence" value="ECO:0000318"/>
    <property type="project" value="GO_Central"/>
</dbReference>
<dbReference type="GO" id="GO:0005509">
    <property type="term" value="F:calcium ion binding"/>
    <property type="evidence" value="ECO:0000314"/>
    <property type="project" value="UniProtKB"/>
</dbReference>
<dbReference type="GO" id="GO:0048168">
    <property type="term" value="P:regulation of neuronal synaptic plasticity"/>
    <property type="evidence" value="ECO:0000315"/>
    <property type="project" value="UniProtKB"/>
</dbReference>
<dbReference type="GO" id="GO:0046928">
    <property type="term" value="P:regulation of neurotransmitter secretion"/>
    <property type="evidence" value="ECO:0000315"/>
    <property type="project" value="UniProtKB"/>
</dbReference>
<dbReference type="GO" id="GO:0016079">
    <property type="term" value="P:synaptic vesicle exocytosis"/>
    <property type="evidence" value="ECO:0000314"/>
    <property type="project" value="SynGO"/>
</dbReference>
<dbReference type="CDD" id="cd04042">
    <property type="entry name" value="C2A_MCTP_PRT"/>
    <property type="match status" value="1"/>
</dbReference>
<dbReference type="CDD" id="cd08376">
    <property type="entry name" value="C2B_MCTP_PRT"/>
    <property type="match status" value="1"/>
</dbReference>
<dbReference type="CDD" id="cd08377">
    <property type="entry name" value="C2C_MCTP_PRT"/>
    <property type="match status" value="1"/>
</dbReference>
<dbReference type="FunFam" id="2.60.40.150:FF:000076">
    <property type="entry name" value="multiple C2 and transmembrane domain-containing protein 2 isoform X1"/>
    <property type="match status" value="1"/>
</dbReference>
<dbReference type="FunFam" id="2.60.40.150:FF:000167">
    <property type="entry name" value="Multiple C2 domains, transmembrane 2a"/>
    <property type="match status" value="1"/>
</dbReference>
<dbReference type="FunFam" id="2.60.40.150:FF:000174">
    <property type="entry name" value="Multiple C2 domains, transmembrane 2a"/>
    <property type="match status" value="1"/>
</dbReference>
<dbReference type="Gene3D" id="2.60.40.150">
    <property type="entry name" value="C2 domain"/>
    <property type="match status" value="3"/>
</dbReference>
<dbReference type="InterPro" id="IPR000008">
    <property type="entry name" value="C2_dom"/>
</dbReference>
<dbReference type="InterPro" id="IPR035892">
    <property type="entry name" value="C2_domain_sf"/>
</dbReference>
<dbReference type="InterPro" id="IPR013583">
    <property type="entry name" value="MCTP_C"/>
</dbReference>
<dbReference type="PANTHER" id="PTHR45911">
    <property type="entry name" value="C2 DOMAIN-CONTAINING PROTEIN"/>
    <property type="match status" value="1"/>
</dbReference>
<dbReference type="PANTHER" id="PTHR45911:SF4">
    <property type="entry name" value="MULTIPLE C2 AND TRANSMEMBRANE DOMAIN-CONTAINING PROTEIN"/>
    <property type="match status" value="1"/>
</dbReference>
<dbReference type="Pfam" id="PF00168">
    <property type="entry name" value="C2"/>
    <property type="match status" value="3"/>
</dbReference>
<dbReference type="Pfam" id="PF08372">
    <property type="entry name" value="PRT_C"/>
    <property type="match status" value="1"/>
</dbReference>
<dbReference type="PRINTS" id="PR00360">
    <property type="entry name" value="C2DOMAIN"/>
</dbReference>
<dbReference type="SMART" id="SM00239">
    <property type="entry name" value="C2"/>
    <property type="match status" value="3"/>
</dbReference>
<dbReference type="SUPFAM" id="SSF49562">
    <property type="entry name" value="C2 domain (Calcium/lipid-binding domain, CaLB)"/>
    <property type="match status" value="3"/>
</dbReference>
<dbReference type="PROSITE" id="PS50004">
    <property type="entry name" value="C2"/>
    <property type="match status" value="3"/>
</dbReference>
<accession>A1ZBD6</accession>
<accession>A0A0B4KEZ6</accession>
<accession>A0A0C4DHG8</accession>
<accession>A0A126GUP9</accession>
<evidence type="ECO:0000255" key="1"/>
<evidence type="ECO:0000255" key="2">
    <source>
        <dbReference type="PROSITE-ProRule" id="PRU00041"/>
    </source>
</evidence>
<evidence type="ECO:0000256" key="3">
    <source>
        <dbReference type="SAM" id="MobiDB-lite"/>
    </source>
</evidence>
<evidence type="ECO:0000269" key="4">
    <source>
    </source>
</evidence>
<evidence type="ECO:0000305" key="5"/>
<evidence type="ECO:0000312" key="6">
    <source>
        <dbReference type="FlyBase" id="FBgn0034389"/>
    </source>
</evidence>
<protein>
    <recommendedName>
        <fullName evidence="5">Multiple C2 and transmembrane domain-containing protein</fullName>
    </recommendedName>
</protein>
<proteinExistence type="evidence at protein level"/>